<feature type="signal peptide" evidence="1">
    <location>
        <begin position="1"/>
        <end position="22"/>
    </location>
</feature>
<feature type="chain" id="PRO_0000021096" description="Protein DDR2">
    <location>
        <begin position="23"/>
        <end position="61"/>
    </location>
</feature>
<feature type="glycosylation site" description="N-linked (GlcNAc...) asparagine" evidence="1">
    <location>
        <position position="24"/>
    </location>
</feature>
<feature type="glycosylation site" description="N-linked (GlcNAc...) asparagine" evidence="1">
    <location>
        <position position="27"/>
    </location>
</feature>
<dbReference type="EMBL" id="U82215">
    <property type="protein sequence ID" value="AAB40031.1"/>
    <property type="molecule type" value="Genomic_DNA"/>
</dbReference>
<dbReference type="EMBL" id="Z74794">
    <property type="protein sequence ID" value="CAA99059.1"/>
    <property type="molecule type" value="Genomic_DNA"/>
</dbReference>
<dbReference type="EMBL" id="Z74795">
    <property type="protein sequence ID" value="CAA99061.1"/>
    <property type="molecule type" value="Genomic_DNA"/>
</dbReference>
<dbReference type="EMBL" id="BK006948">
    <property type="protein sequence ID" value="DAA10731.1"/>
    <property type="molecule type" value="Genomic_DNA"/>
</dbReference>
<dbReference type="PIR" id="S69290">
    <property type="entry name" value="S69290"/>
</dbReference>
<dbReference type="RefSeq" id="NP_014589.1">
    <property type="nucleotide sequence ID" value="NM_001183307.1"/>
</dbReference>
<dbReference type="BioGRID" id="34351">
    <property type="interactions" value="41"/>
</dbReference>
<dbReference type="DIP" id="DIP-7584N"/>
<dbReference type="FunCoup" id="P89113">
    <property type="interactions" value="168"/>
</dbReference>
<dbReference type="IntAct" id="P89113">
    <property type="interactions" value="3"/>
</dbReference>
<dbReference type="MINT" id="P89113"/>
<dbReference type="STRING" id="4932.YOL052C-A"/>
<dbReference type="GlyCosmos" id="P89113">
    <property type="glycosylation" value="2 sites, No reported glycans"/>
</dbReference>
<dbReference type="GlyGen" id="P89113">
    <property type="glycosylation" value="2 sites"/>
</dbReference>
<dbReference type="PaxDb" id="4932-YOL052C-A"/>
<dbReference type="EnsemblFungi" id="YOL052C-A_mRNA">
    <property type="protein sequence ID" value="YOL052C-A"/>
    <property type="gene ID" value="YOL052C-A"/>
</dbReference>
<dbReference type="GeneID" id="854104"/>
<dbReference type="KEGG" id="sce:YOL052C-A"/>
<dbReference type="AGR" id="SGD:S000005413"/>
<dbReference type="SGD" id="S000005413">
    <property type="gene designation" value="DDR2"/>
</dbReference>
<dbReference type="VEuPathDB" id="FungiDB:YOL052C-A"/>
<dbReference type="HOGENOM" id="CLU_209340_0_0_1"/>
<dbReference type="InParanoid" id="P89113"/>
<dbReference type="BioCyc" id="YEAST:G3O-33463-MONOMER"/>
<dbReference type="BioGRID-ORCS" id="854104">
    <property type="hits" value="5 hits in 10 CRISPR screens"/>
</dbReference>
<dbReference type="PRO" id="PR:P89113"/>
<dbReference type="Proteomes" id="UP000002311">
    <property type="component" value="Chromosome XV"/>
</dbReference>
<dbReference type="RNAct" id="P89113">
    <property type="molecule type" value="protein"/>
</dbReference>
<dbReference type="GO" id="GO:0005737">
    <property type="term" value="C:cytoplasm"/>
    <property type="evidence" value="ECO:0007005"/>
    <property type="project" value="SGD"/>
</dbReference>
<dbReference type="GO" id="GO:0000324">
    <property type="term" value="C:fungal-type vacuole"/>
    <property type="evidence" value="ECO:0007005"/>
    <property type="project" value="SGD"/>
</dbReference>
<dbReference type="GO" id="GO:0034605">
    <property type="term" value="P:cellular response to heat"/>
    <property type="evidence" value="ECO:0000270"/>
    <property type="project" value="SGD"/>
</dbReference>
<dbReference type="GO" id="GO:0070301">
    <property type="term" value="P:cellular response to hydrogen peroxide"/>
    <property type="evidence" value="ECO:0000270"/>
    <property type="project" value="SGD"/>
</dbReference>
<dbReference type="GO" id="GO:0009267">
    <property type="term" value="P:cellular response to starvation"/>
    <property type="evidence" value="ECO:0000270"/>
    <property type="project" value="SGD"/>
</dbReference>
<dbReference type="GO" id="GO:0006974">
    <property type="term" value="P:DNA damage response"/>
    <property type="evidence" value="ECO:0000270"/>
    <property type="project" value="SGD"/>
</dbReference>
<gene>
    <name type="primary">DDR2</name>
    <name type="ordered locus">YOL052C-A</name>
    <name type="ORF">YOL052BC</name>
    <name type="ORF">YOL053C-A</name>
</gene>
<proteinExistence type="evidence at protein level"/>
<name>DDR2_YEAST</name>
<organism>
    <name type="scientific">Saccharomyces cerevisiae (strain ATCC 204508 / S288c)</name>
    <name type="common">Baker's yeast</name>
    <dbReference type="NCBI Taxonomy" id="559292"/>
    <lineage>
        <taxon>Eukaryota</taxon>
        <taxon>Fungi</taxon>
        <taxon>Dikarya</taxon>
        <taxon>Ascomycota</taxon>
        <taxon>Saccharomycotina</taxon>
        <taxon>Saccharomycetes</taxon>
        <taxon>Saccharomycetales</taxon>
        <taxon>Saccharomycetaceae</taxon>
        <taxon>Saccharomyces</taxon>
    </lineage>
</organism>
<accession>P89113</accession>
<accession>D6W215</accession>
<protein>
    <recommendedName>
        <fullName>Protein DDR2</fullName>
    </recommendedName>
</protein>
<reference key="1">
    <citation type="journal article" date="1996" name="Biochem. Biophys. Res. Commun.">
        <title>Structure and functional analysis of the multistress response gene DDR2 from Saccharomyces cerevisiae.</title>
        <authorList>
            <person name="Kobayashi N."/>
            <person name="McClanahan T.K."/>
            <person name="Simon J.R."/>
            <person name="Treger J.M."/>
            <person name="McEntee K."/>
        </authorList>
    </citation>
    <scope>NUCLEOTIDE SEQUENCE [GENOMIC DNA]</scope>
</reference>
<reference key="2">
    <citation type="journal article" date="1996" name="Yeast">
        <title>Analysis of a 26 kb region on the left arm of yeast chromosome XV.</title>
        <authorList>
            <person name="Mannhaupt G."/>
            <person name="Vetter I."/>
            <person name="Schwarzlose C."/>
            <person name="Mitzel S."/>
            <person name="Feldmann H."/>
        </authorList>
    </citation>
    <scope>NUCLEOTIDE SEQUENCE [GENOMIC DNA]</scope>
    <source>
        <strain>ATCC 90843 / S288c / FY73</strain>
    </source>
</reference>
<reference key="3">
    <citation type="journal article" date="1997" name="Nature">
        <title>The nucleotide sequence of Saccharomyces cerevisiae chromosome XV.</title>
        <authorList>
            <person name="Dujon B."/>
            <person name="Albermann K."/>
            <person name="Aldea M."/>
            <person name="Alexandraki D."/>
            <person name="Ansorge W."/>
            <person name="Arino J."/>
            <person name="Benes V."/>
            <person name="Bohn C."/>
            <person name="Bolotin-Fukuhara M."/>
            <person name="Bordonne R."/>
            <person name="Boyer J."/>
            <person name="Camasses A."/>
            <person name="Casamayor A."/>
            <person name="Casas C."/>
            <person name="Cheret G."/>
            <person name="Cziepluch C."/>
            <person name="Daignan-Fornier B."/>
            <person name="Dang V.-D."/>
            <person name="de Haan M."/>
            <person name="Delius H."/>
            <person name="Durand P."/>
            <person name="Fairhead C."/>
            <person name="Feldmann H."/>
            <person name="Gaillon L."/>
            <person name="Galisson F."/>
            <person name="Gamo F.-J."/>
            <person name="Gancedo C."/>
            <person name="Goffeau A."/>
            <person name="Goulding S.E."/>
            <person name="Grivell L.A."/>
            <person name="Habbig B."/>
            <person name="Hand N.J."/>
            <person name="Hani J."/>
            <person name="Hattenhorst U."/>
            <person name="Hebling U."/>
            <person name="Hernando Y."/>
            <person name="Herrero E."/>
            <person name="Heumann K."/>
            <person name="Hiesel R."/>
            <person name="Hilger F."/>
            <person name="Hofmann B."/>
            <person name="Hollenberg C.P."/>
            <person name="Hughes B."/>
            <person name="Jauniaux J.-C."/>
            <person name="Kalogeropoulos A."/>
            <person name="Katsoulou C."/>
            <person name="Kordes E."/>
            <person name="Lafuente M.J."/>
            <person name="Landt O."/>
            <person name="Louis E.J."/>
            <person name="Maarse A.C."/>
            <person name="Madania A."/>
            <person name="Mannhaupt G."/>
            <person name="Marck C."/>
            <person name="Martin R.P."/>
            <person name="Mewes H.-W."/>
            <person name="Michaux G."/>
            <person name="Paces V."/>
            <person name="Parle-McDermott A.G."/>
            <person name="Pearson B.M."/>
            <person name="Perrin A."/>
            <person name="Pettersson B."/>
            <person name="Poch O."/>
            <person name="Pohl T.M."/>
            <person name="Poirey R."/>
            <person name="Portetelle D."/>
            <person name="Pujol A."/>
            <person name="Purnelle B."/>
            <person name="Ramezani Rad M."/>
            <person name="Rechmann S."/>
            <person name="Schwager C."/>
            <person name="Schweizer M."/>
            <person name="Sor F."/>
            <person name="Sterky F."/>
            <person name="Tarassov I.A."/>
            <person name="Teodoru C."/>
            <person name="Tettelin H."/>
            <person name="Thierry A."/>
            <person name="Tobiasch E."/>
            <person name="Tzermia M."/>
            <person name="Uhlen M."/>
            <person name="Unseld M."/>
            <person name="Valens M."/>
            <person name="Vandenbol M."/>
            <person name="Vetter I."/>
            <person name="Vlcek C."/>
            <person name="Voet M."/>
            <person name="Volckaert G."/>
            <person name="Voss H."/>
            <person name="Wambutt R."/>
            <person name="Wedler H."/>
            <person name="Wiemann S."/>
            <person name="Winsor B."/>
            <person name="Wolfe K.H."/>
            <person name="Zollner A."/>
            <person name="Zumstein E."/>
            <person name="Kleine K."/>
        </authorList>
    </citation>
    <scope>NUCLEOTIDE SEQUENCE [LARGE SCALE GENOMIC DNA]</scope>
    <source>
        <strain>ATCC 204508 / S288c</strain>
    </source>
</reference>
<reference key="4">
    <citation type="journal article" date="2014" name="G3 (Bethesda)">
        <title>The reference genome sequence of Saccharomyces cerevisiae: Then and now.</title>
        <authorList>
            <person name="Engel S.R."/>
            <person name="Dietrich F.S."/>
            <person name="Fisk D.G."/>
            <person name="Binkley G."/>
            <person name="Balakrishnan R."/>
            <person name="Costanzo M.C."/>
            <person name="Dwight S.S."/>
            <person name="Hitz B.C."/>
            <person name="Karra K."/>
            <person name="Nash R.S."/>
            <person name="Weng S."/>
            <person name="Wong E.D."/>
            <person name="Lloyd P."/>
            <person name="Skrzypek M.S."/>
            <person name="Miyasato S.R."/>
            <person name="Simison M."/>
            <person name="Cherry J.M."/>
        </authorList>
    </citation>
    <scope>GENOME REANNOTATION</scope>
    <source>
        <strain>ATCC 204508 / S288c</strain>
    </source>
</reference>
<reference key="5">
    <citation type="journal article" date="2003" name="Nature">
        <title>Global analysis of protein expression in yeast.</title>
        <authorList>
            <person name="Ghaemmaghami S."/>
            <person name="Huh W.-K."/>
            <person name="Bower K."/>
            <person name="Howson R.W."/>
            <person name="Belle A."/>
            <person name="Dephoure N."/>
            <person name="O'Shea E.K."/>
            <person name="Weissman J.S."/>
        </authorList>
    </citation>
    <scope>LEVEL OF PROTEIN EXPRESSION [LARGE SCALE ANALYSIS]</scope>
</reference>
<sequence length="61" mass="5955">MKVSQVFISAISVFGLATSVNAQNASNTTSNAAPALHAQNGQLLNAGVVGAAVGGALAFLI</sequence>
<keyword id="KW-0325">Glycoprotein</keyword>
<keyword id="KW-1185">Reference proteome</keyword>
<keyword id="KW-0732">Signal</keyword>
<keyword id="KW-0346">Stress response</keyword>
<evidence type="ECO:0000255" key="1"/>
<evidence type="ECO:0000269" key="2">
    <source>
    </source>
</evidence>
<evidence type="ECO:0000305" key="3"/>
<comment type="function">
    <text>May play an important role in the response of cells to diverse environmental stresses.</text>
</comment>
<comment type="induction">
    <text>By multistress. Expression is controlled by the MSN2 and MSN4 transcriptional regulators.</text>
</comment>
<comment type="miscellaneous">
    <text evidence="2">Present with 784 molecules/cell in log phase SD medium.</text>
</comment>
<comment type="similarity">
    <text evidence="3">To yeast HOR7.</text>
</comment>